<keyword id="KW-0046">Antibiotic resistance</keyword>
<keyword id="KW-0378">Hydrolase</keyword>
<keyword id="KW-0441">Lipid A biosynthesis</keyword>
<keyword id="KW-0444">Lipid biosynthesis</keyword>
<keyword id="KW-0443">Lipid metabolism</keyword>
<keyword id="KW-0448">Lipopolysaccharide biosynthesis</keyword>
<gene>
    <name evidence="1" type="primary">arnD</name>
    <name type="ordered locus">PSPPH_2805</name>
</gene>
<protein>
    <recommendedName>
        <fullName evidence="1">Probable 4-deoxy-4-formamido-L-arabinose-phosphoundecaprenol deformylase ArnD</fullName>
        <ecNumber evidence="1">3.5.1.n3</ecNumber>
    </recommendedName>
</protein>
<name>ARND_PSE14</name>
<feature type="chain" id="PRO_0000383525" description="Probable 4-deoxy-4-formamido-L-arabinose-phosphoundecaprenol deformylase ArnD">
    <location>
        <begin position="1"/>
        <end position="293"/>
    </location>
</feature>
<feature type="domain" description="NodB homology" evidence="1">
    <location>
        <begin position="1"/>
        <end position="259"/>
    </location>
</feature>
<dbReference type="EC" id="3.5.1.n3" evidence="1"/>
<dbReference type="EMBL" id="CP000058">
    <property type="protein sequence ID" value="AAZ37085.1"/>
    <property type="molecule type" value="Genomic_DNA"/>
</dbReference>
<dbReference type="RefSeq" id="WP_011168796.1">
    <property type="nucleotide sequence ID" value="NC_005773.3"/>
</dbReference>
<dbReference type="SMR" id="Q48HZ0"/>
<dbReference type="KEGG" id="psp:PSPPH_2805"/>
<dbReference type="eggNOG" id="COG0726">
    <property type="taxonomic scope" value="Bacteria"/>
</dbReference>
<dbReference type="HOGENOM" id="CLU_084199_0_0_6"/>
<dbReference type="UniPathway" id="UPA00030"/>
<dbReference type="UniPathway" id="UPA00036">
    <property type="reaction ID" value="UER00496"/>
</dbReference>
<dbReference type="Proteomes" id="UP000000551">
    <property type="component" value="Chromosome"/>
</dbReference>
<dbReference type="GO" id="GO:0016020">
    <property type="term" value="C:membrane"/>
    <property type="evidence" value="ECO:0007669"/>
    <property type="project" value="GOC"/>
</dbReference>
<dbReference type="GO" id="GO:0016811">
    <property type="term" value="F:hydrolase activity, acting on carbon-nitrogen (but not peptide) bonds, in linear amides"/>
    <property type="evidence" value="ECO:0007669"/>
    <property type="project" value="UniProtKB-UniRule"/>
</dbReference>
<dbReference type="GO" id="GO:0036108">
    <property type="term" value="P:4-amino-4-deoxy-alpha-L-arabinopyranosyl undecaprenyl phosphate biosynthetic process"/>
    <property type="evidence" value="ECO:0007669"/>
    <property type="project" value="UniProtKB-UniRule"/>
</dbReference>
<dbReference type="GO" id="GO:0009245">
    <property type="term" value="P:lipid A biosynthetic process"/>
    <property type="evidence" value="ECO:0007669"/>
    <property type="project" value="UniProtKB-UniRule"/>
</dbReference>
<dbReference type="GO" id="GO:0009103">
    <property type="term" value="P:lipopolysaccharide biosynthetic process"/>
    <property type="evidence" value="ECO:0007669"/>
    <property type="project" value="UniProtKB-UniRule"/>
</dbReference>
<dbReference type="GO" id="GO:0046677">
    <property type="term" value="P:response to antibiotic"/>
    <property type="evidence" value="ECO:0007669"/>
    <property type="project" value="UniProtKB-KW"/>
</dbReference>
<dbReference type="Gene3D" id="3.20.20.370">
    <property type="entry name" value="Glycoside hydrolase/deacetylase"/>
    <property type="match status" value="1"/>
</dbReference>
<dbReference type="HAMAP" id="MF_01870">
    <property type="entry name" value="ArnD"/>
    <property type="match status" value="1"/>
</dbReference>
<dbReference type="InterPro" id="IPR023557">
    <property type="entry name" value="ArnD"/>
</dbReference>
<dbReference type="InterPro" id="IPR011330">
    <property type="entry name" value="Glyco_hydro/deAcase_b/a-brl"/>
</dbReference>
<dbReference type="InterPro" id="IPR002509">
    <property type="entry name" value="NODB_dom"/>
</dbReference>
<dbReference type="InterPro" id="IPR050248">
    <property type="entry name" value="Polysacc_deacetylase_ArnD"/>
</dbReference>
<dbReference type="NCBIfam" id="NF011923">
    <property type="entry name" value="PRK15394.1"/>
    <property type="match status" value="1"/>
</dbReference>
<dbReference type="PANTHER" id="PTHR10587:SF137">
    <property type="entry name" value="4-DEOXY-4-FORMAMIDO-L-ARABINOSE-PHOSPHOUNDECAPRENOL DEFORMYLASE ARND-RELATED"/>
    <property type="match status" value="1"/>
</dbReference>
<dbReference type="PANTHER" id="PTHR10587">
    <property type="entry name" value="GLYCOSYL TRANSFERASE-RELATED"/>
    <property type="match status" value="1"/>
</dbReference>
<dbReference type="Pfam" id="PF01522">
    <property type="entry name" value="Polysacc_deac_1"/>
    <property type="match status" value="1"/>
</dbReference>
<dbReference type="SUPFAM" id="SSF88713">
    <property type="entry name" value="Glycoside hydrolase/deacetylase"/>
    <property type="match status" value="1"/>
</dbReference>
<dbReference type="PROSITE" id="PS51677">
    <property type="entry name" value="NODB"/>
    <property type="match status" value="1"/>
</dbReference>
<sequence length="293" mass="32728">MQAGLRIDVDTYRGTREGVPRLLDILDEAQVKATFFFSVGPDNMGRHLWRLARPTFFWKMLRSRAASLYGWDILLAGTAWPGKPIGRDLGPLMRRALDAGHEVGLHAWDHHGWQANAGRWNDRQLTAQIHRGVDCLSDILGNPVICSAAAGWRADQHVVQAKQAFGFRYNSDSRGATLFRPLLADGRLGTPQIPVDLPTFDEVVGPQLQPGAFNEYILNRFAAQRLNVYTIHAEVEGIVMADGFRQLLRQADAREIEFNPLGQLLPESIEQLPCGQVVRGHLPGREGWLGVQQ</sequence>
<comment type="function">
    <text evidence="1">Catalyzes the deformylation of 4-deoxy-4-formamido-L-arabinose-phosphoundecaprenol to 4-amino-4-deoxy-L-arabinose-phosphoundecaprenol. The modified arabinose is attached to lipid A and is required for resistance to polymyxin and cationic antimicrobial peptides.</text>
</comment>
<comment type="catalytic activity">
    <reaction evidence="1">
        <text>4-deoxy-4-formamido-alpha-L-arabinopyranosyl di-trans,octa-cis-undecaprenyl phosphate + H2O = 4-amino-4-deoxy-alpha-L-arabinopyranosyl di-trans,octa-cis-undecaprenyl phosphate + formate</text>
        <dbReference type="Rhea" id="RHEA:27734"/>
        <dbReference type="ChEBI" id="CHEBI:15377"/>
        <dbReference type="ChEBI" id="CHEBI:15740"/>
        <dbReference type="ChEBI" id="CHEBI:58909"/>
        <dbReference type="ChEBI" id="CHEBI:60463"/>
        <dbReference type="EC" id="3.5.1.n3"/>
    </reaction>
</comment>
<comment type="pathway">
    <text evidence="1">Glycolipid biosynthesis; 4-amino-4-deoxy-alpha-L-arabinose undecaprenyl phosphate biosynthesis; 4-amino-4-deoxy-alpha-L-arabinose undecaprenyl phosphate from UDP-4-deoxy-4-formamido-beta-L-arabinose and undecaprenyl phosphate: step 2/2.</text>
</comment>
<comment type="pathway">
    <text evidence="1">Bacterial outer membrane biogenesis; lipopolysaccharide biosynthesis.</text>
</comment>
<comment type="similarity">
    <text evidence="1">Belongs to the polysaccharide deacetylase family. ArnD deformylase subfamily.</text>
</comment>
<organism>
    <name type="scientific">Pseudomonas savastanoi pv. phaseolicola (strain 1448A / Race 6)</name>
    <name type="common">Pseudomonas syringae pv. phaseolicola (strain 1448A / Race 6)</name>
    <dbReference type="NCBI Taxonomy" id="264730"/>
    <lineage>
        <taxon>Bacteria</taxon>
        <taxon>Pseudomonadati</taxon>
        <taxon>Pseudomonadota</taxon>
        <taxon>Gammaproteobacteria</taxon>
        <taxon>Pseudomonadales</taxon>
        <taxon>Pseudomonadaceae</taxon>
        <taxon>Pseudomonas</taxon>
    </lineage>
</organism>
<reference key="1">
    <citation type="journal article" date="2005" name="J. Bacteriol.">
        <title>Whole-genome sequence analysis of Pseudomonas syringae pv. phaseolicola 1448A reveals divergence among pathovars in genes involved in virulence and transposition.</title>
        <authorList>
            <person name="Joardar V."/>
            <person name="Lindeberg M."/>
            <person name="Jackson R.W."/>
            <person name="Selengut J."/>
            <person name="Dodson R."/>
            <person name="Brinkac L.M."/>
            <person name="Daugherty S.C."/>
            <person name="DeBoy R.T."/>
            <person name="Durkin A.S."/>
            <person name="Gwinn Giglio M."/>
            <person name="Madupu R."/>
            <person name="Nelson W.C."/>
            <person name="Rosovitz M.J."/>
            <person name="Sullivan S.A."/>
            <person name="Crabtree J."/>
            <person name="Creasy T."/>
            <person name="Davidsen T.M."/>
            <person name="Haft D.H."/>
            <person name="Zafar N."/>
            <person name="Zhou L."/>
            <person name="Halpin R."/>
            <person name="Holley T."/>
            <person name="Khouri H.M."/>
            <person name="Feldblyum T.V."/>
            <person name="White O."/>
            <person name="Fraser C.M."/>
            <person name="Chatterjee A.K."/>
            <person name="Cartinhour S."/>
            <person name="Schneider D."/>
            <person name="Mansfield J.W."/>
            <person name="Collmer A."/>
            <person name="Buell R."/>
        </authorList>
    </citation>
    <scope>NUCLEOTIDE SEQUENCE [LARGE SCALE GENOMIC DNA]</scope>
    <source>
        <strain>1448A / Race 6</strain>
    </source>
</reference>
<accession>Q48HZ0</accession>
<evidence type="ECO:0000255" key="1">
    <source>
        <dbReference type="HAMAP-Rule" id="MF_01870"/>
    </source>
</evidence>
<proteinExistence type="inferred from homology"/>